<organism>
    <name type="scientific">Staphylococcus aureus (strain MSSA476)</name>
    <dbReference type="NCBI Taxonomy" id="282459"/>
    <lineage>
        <taxon>Bacteria</taxon>
        <taxon>Bacillati</taxon>
        <taxon>Bacillota</taxon>
        <taxon>Bacilli</taxon>
        <taxon>Bacillales</taxon>
        <taxon>Staphylococcaceae</taxon>
        <taxon>Staphylococcus</taxon>
    </lineage>
</organism>
<sequence length="61" mass="6744">MPIVNVKLLEGRSDEQLKNLVSEVTDAVEKTTGANRQAIHVVIEEMKPNHYGVAGVRKSDQ</sequence>
<feature type="initiator methionine" description="Removed" evidence="1">
    <location>
        <position position="1"/>
    </location>
</feature>
<feature type="chain" id="PRO_0000209544" description="Probable tautomerase SAS1303">
    <location>
        <begin position="2"/>
        <end position="61"/>
    </location>
</feature>
<feature type="active site" description="Proton acceptor; via imino nitrogen" evidence="1">
    <location>
        <position position="2"/>
    </location>
</feature>
<evidence type="ECO:0000250" key="1"/>
<evidence type="ECO:0000305" key="2"/>
<accession>Q6G9J6</accession>
<comment type="similarity">
    <text evidence="2">Belongs to the 4-oxalocrotonate tautomerase family.</text>
</comment>
<comment type="sequence caution" evidence="2">
    <conflict type="erroneous initiation">
        <sequence resource="EMBL-CDS" id="CAG43080"/>
    </conflict>
</comment>
<name>Y1303_STAAS</name>
<protein>
    <recommendedName>
        <fullName>Probable tautomerase SAS1303</fullName>
        <ecNumber>5.3.2.-</ecNumber>
    </recommendedName>
</protein>
<dbReference type="EC" id="5.3.2.-"/>
<dbReference type="EMBL" id="BX571857">
    <property type="protein sequence ID" value="CAG43080.1"/>
    <property type="status" value="ALT_INIT"/>
    <property type="molecule type" value="Genomic_DNA"/>
</dbReference>
<dbReference type="RefSeq" id="WP_001123276.1">
    <property type="nucleotide sequence ID" value="NC_002953.3"/>
</dbReference>
<dbReference type="SMR" id="Q6G9J6"/>
<dbReference type="KEGG" id="sas:SAS1303"/>
<dbReference type="HOGENOM" id="CLU_148073_5_1_9"/>
<dbReference type="GO" id="GO:0016853">
    <property type="term" value="F:isomerase activity"/>
    <property type="evidence" value="ECO:0007669"/>
    <property type="project" value="UniProtKB-KW"/>
</dbReference>
<dbReference type="CDD" id="cd00491">
    <property type="entry name" value="4Oxalocrotonate_Tautomerase"/>
    <property type="match status" value="1"/>
</dbReference>
<dbReference type="Gene3D" id="3.30.429.10">
    <property type="entry name" value="Macrophage Migration Inhibitory Factor"/>
    <property type="match status" value="1"/>
</dbReference>
<dbReference type="InterPro" id="IPR018191">
    <property type="entry name" value="4-OT"/>
</dbReference>
<dbReference type="InterPro" id="IPR004370">
    <property type="entry name" value="4-OT-like_dom"/>
</dbReference>
<dbReference type="InterPro" id="IPR014347">
    <property type="entry name" value="Tautomerase/MIF_sf"/>
</dbReference>
<dbReference type="NCBIfam" id="NF002571">
    <property type="entry name" value="PRK02220.1"/>
    <property type="match status" value="1"/>
</dbReference>
<dbReference type="NCBIfam" id="TIGR00013">
    <property type="entry name" value="taut"/>
    <property type="match status" value="1"/>
</dbReference>
<dbReference type="PANTHER" id="PTHR35530:SF1">
    <property type="entry name" value="2-HYDROXYMUCONATE TAUTOMERASE"/>
    <property type="match status" value="1"/>
</dbReference>
<dbReference type="PANTHER" id="PTHR35530">
    <property type="entry name" value="TAUTOMERASE-RELATED"/>
    <property type="match status" value="1"/>
</dbReference>
<dbReference type="Pfam" id="PF01361">
    <property type="entry name" value="Tautomerase"/>
    <property type="match status" value="1"/>
</dbReference>
<dbReference type="SUPFAM" id="SSF55331">
    <property type="entry name" value="Tautomerase/MIF"/>
    <property type="match status" value="1"/>
</dbReference>
<reference key="1">
    <citation type="journal article" date="2004" name="Proc. Natl. Acad. Sci. U.S.A.">
        <title>Complete genomes of two clinical Staphylococcus aureus strains: evidence for the rapid evolution of virulence and drug resistance.</title>
        <authorList>
            <person name="Holden M.T.G."/>
            <person name="Feil E.J."/>
            <person name="Lindsay J.A."/>
            <person name="Peacock S.J."/>
            <person name="Day N.P.J."/>
            <person name="Enright M.C."/>
            <person name="Foster T.J."/>
            <person name="Moore C.E."/>
            <person name="Hurst L."/>
            <person name="Atkin R."/>
            <person name="Barron A."/>
            <person name="Bason N."/>
            <person name="Bentley S.D."/>
            <person name="Chillingworth C."/>
            <person name="Chillingworth T."/>
            <person name="Churcher C."/>
            <person name="Clark L."/>
            <person name="Corton C."/>
            <person name="Cronin A."/>
            <person name="Doggett J."/>
            <person name="Dowd L."/>
            <person name="Feltwell T."/>
            <person name="Hance Z."/>
            <person name="Harris B."/>
            <person name="Hauser H."/>
            <person name="Holroyd S."/>
            <person name="Jagels K."/>
            <person name="James K.D."/>
            <person name="Lennard N."/>
            <person name="Line A."/>
            <person name="Mayes R."/>
            <person name="Moule S."/>
            <person name="Mungall K."/>
            <person name="Ormond D."/>
            <person name="Quail M.A."/>
            <person name="Rabbinowitsch E."/>
            <person name="Rutherford K.M."/>
            <person name="Sanders M."/>
            <person name="Sharp S."/>
            <person name="Simmonds M."/>
            <person name="Stevens K."/>
            <person name="Whitehead S."/>
            <person name="Barrell B.G."/>
            <person name="Spratt B.G."/>
            <person name="Parkhill J."/>
        </authorList>
    </citation>
    <scope>NUCLEOTIDE SEQUENCE [LARGE SCALE GENOMIC DNA]</scope>
    <source>
        <strain>MSSA476</strain>
    </source>
</reference>
<proteinExistence type="inferred from homology"/>
<keyword id="KW-0413">Isomerase</keyword>
<gene>
    <name type="ordered locus">SAS1303</name>
</gene>